<sequence>MVNTLEKPGFDEIRPGVKTPAKETILTPRFYTTDFDEMAKMDISPNEDELRAILEEFRVDYNRHHFVRNESFNKSWDHIDGEKRQLFVEFLERSCTAEFSGFLLYKELGRRLKNKNPLLAECFNLMSRDEARHAGFLNKAMSDFNLSLDLGFLTKSRKYTFFKPKFIFYATYLSEKIGYWRYITIYRHLEKNPNDCIYPIFEFFENWCQDENRHGDFFDAIMRAQPHTLNDWKAKLWCRFFLLSVFATMYLNDTQRADFYACLGLEARSYDKEVIEKTNETAGRVFPIILDVNNPEFYNRLETCVSNNEQLRAIDASGAPGVIKALRKLPIFASNGWQFIKLYLMKPIAVDQLAGAVR</sequence>
<name>ACSF1_SYNY3</name>
<protein>
    <recommendedName>
        <fullName evidence="1">Magnesium-protoporphyrin IX monomethyl ester [oxidative] cyclase 1</fullName>
        <shortName evidence="1">Mg-protoporphyrin IX monomethyl ester oxidative cyclase 1</shortName>
        <ecNumber evidence="1">1.14.13.81</ecNumber>
    </recommendedName>
</protein>
<organism>
    <name type="scientific">Synechocystis sp. (strain ATCC 27184 / PCC 6803 / Kazusa)</name>
    <dbReference type="NCBI Taxonomy" id="1111708"/>
    <lineage>
        <taxon>Bacteria</taxon>
        <taxon>Bacillati</taxon>
        <taxon>Cyanobacteriota</taxon>
        <taxon>Cyanophyceae</taxon>
        <taxon>Synechococcales</taxon>
        <taxon>Merismopediaceae</taxon>
        <taxon>Synechocystis</taxon>
    </lineage>
</organism>
<reference key="1">
    <citation type="journal article" date="1996" name="DNA Res.">
        <title>Sequence analysis of the genome of the unicellular cyanobacterium Synechocystis sp. strain PCC6803. II. Sequence determination of the entire genome and assignment of potential protein-coding regions.</title>
        <authorList>
            <person name="Kaneko T."/>
            <person name="Sato S."/>
            <person name="Kotani H."/>
            <person name="Tanaka A."/>
            <person name="Asamizu E."/>
            <person name="Nakamura Y."/>
            <person name="Miyajima N."/>
            <person name="Hirosawa M."/>
            <person name="Sugiura M."/>
            <person name="Sasamoto S."/>
            <person name="Kimura T."/>
            <person name="Hosouchi T."/>
            <person name="Matsuno A."/>
            <person name="Muraki A."/>
            <person name="Nakazaki N."/>
            <person name="Naruo K."/>
            <person name="Okumura S."/>
            <person name="Shimpo S."/>
            <person name="Takeuchi C."/>
            <person name="Wada T."/>
            <person name="Watanabe A."/>
            <person name="Yamada M."/>
            <person name="Yasuda M."/>
            <person name="Tabata S."/>
        </authorList>
    </citation>
    <scope>NUCLEOTIDE SEQUENCE [LARGE SCALE GENOMIC DNA]</scope>
    <source>
        <strain>ATCC 27184 / PCC 6803 / Kazusa</strain>
    </source>
</reference>
<feature type="chain" id="PRO_0000217539" description="Magnesium-protoporphyrin IX monomethyl ester [oxidative] cyclase 1">
    <location>
        <begin position="1"/>
        <end position="358"/>
    </location>
</feature>
<proteinExistence type="inferred from homology"/>
<evidence type="ECO:0000255" key="1">
    <source>
        <dbReference type="HAMAP-Rule" id="MF_01840"/>
    </source>
</evidence>
<comment type="function">
    <text evidence="1">Catalyzes the formation of the isocyclic ring in chlorophyll biosynthesis. Mediates the cyclase reaction, which results in the formation of divinylprotochlorophyllide (Pchlide) characteristic of all chlorophylls from magnesium-protoporphyrin IX 13-monomethyl ester (MgPMME).</text>
</comment>
<comment type="catalytic activity">
    <reaction evidence="1">
        <text>Mg-protoporphyrin IX 13-monomethyl ester + 3 NADPH + 3 O2 + 2 H(+) = 3,8-divinyl protochlorophyllide a + 3 NADP(+) + 5 H2O</text>
        <dbReference type="Rhea" id="RHEA:33235"/>
        <dbReference type="ChEBI" id="CHEBI:15377"/>
        <dbReference type="ChEBI" id="CHEBI:15378"/>
        <dbReference type="ChEBI" id="CHEBI:15379"/>
        <dbReference type="ChEBI" id="CHEBI:57783"/>
        <dbReference type="ChEBI" id="CHEBI:58349"/>
        <dbReference type="ChEBI" id="CHEBI:58632"/>
        <dbReference type="ChEBI" id="CHEBI:60491"/>
        <dbReference type="EC" id="1.14.13.81"/>
    </reaction>
</comment>
<comment type="cofactor">
    <cofactor evidence="1">
        <name>Fe cation</name>
        <dbReference type="ChEBI" id="CHEBI:24875"/>
    </cofactor>
</comment>
<comment type="pathway">
    <text evidence="1">Porphyrin-containing compound metabolism; chlorophyll biosynthesis (light-independent).</text>
</comment>
<comment type="similarity">
    <text evidence="1">Belongs to the AcsF family.</text>
</comment>
<keyword id="KW-0149">Chlorophyll biosynthesis</keyword>
<keyword id="KW-0408">Iron</keyword>
<keyword id="KW-0479">Metal-binding</keyword>
<keyword id="KW-0521">NADP</keyword>
<keyword id="KW-0560">Oxidoreductase</keyword>
<keyword id="KW-0602">Photosynthesis</keyword>
<keyword id="KW-1185">Reference proteome</keyword>
<accession>P72584</accession>
<dbReference type="EC" id="1.14.13.81" evidence="1"/>
<dbReference type="EMBL" id="BA000022">
    <property type="protein sequence ID" value="BAA16583.1"/>
    <property type="molecule type" value="Genomic_DNA"/>
</dbReference>
<dbReference type="PIR" id="S74431">
    <property type="entry name" value="S74431"/>
</dbReference>
<dbReference type="SMR" id="P72584"/>
<dbReference type="IntAct" id="P72584">
    <property type="interactions" value="8"/>
</dbReference>
<dbReference type="STRING" id="1148.gene:10497438"/>
<dbReference type="PaxDb" id="1148-1651655"/>
<dbReference type="EnsemblBacteria" id="BAA16583">
    <property type="protein sequence ID" value="BAA16583"/>
    <property type="gene ID" value="BAA16583"/>
</dbReference>
<dbReference type="KEGG" id="syn:sll1214"/>
<dbReference type="eggNOG" id="COG1633">
    <property type="taxonomic scope" value="Bacteria"/>
</dbReference>
<dbReference type="InParanoid" id="P72584"/>
<dbReference type="PhylomeDB" id="P72584"/>
<dbReference type="BioCyc" id="MetaCyc:MONOMER-17787"/>
<dbReference type="BRENDA" id="1.14.13.81">
    <property type="organism ID" value="6192"/>
</dbReference>
<dbReference type="UniPathway" id="UPA00670"/>
<dbReference type="Proteomes" id="UP000001425">
    <property type="component" value="Chromosome"/>
</dbReference>
<dbReference type="GO" id="GO:0005506">
    <property type="term" value="F:iron ion binding"/>
    <property type="evidence" value="ECO:0007669"/>
    <property type="project" value="UniProtKB-UniRule"/>
</dbReference>
<dbReference type="GO" id="GO:0048529">
    <property type="term" value="F:magnesium-protoporphyrin IX monomethyl ester (oxidative) cyclase activity"/>
    <property type="evidence" value="ECO:0000318"/>
    <property type="project" value="GO_Central"/>
</dbReference>
<dbReference type="GO" id="GO:0015995">
    <property type="term" value="P:chlorophyll biosynthetic process"/>
    <property type="evidence" value="ECO:0000318"/>
    <property type="project" value="GO_Central"/>
</dbReference>
<dbReference type="GO" id="GO:0036068">
    <property type="term" value="P:light-independent chlorophyll biosynthetic process"/>
    <property type="evidence" value="ECO:0007669"/>
    <property type="project" value="UniProtKB-UniRule"/>
</dbReference>
<dbReference type="GO" id="GO:0015979">
    <property type="term" value="P:photosynthesis"/>
    <property type="evidence" value="ECO:0007669"/>
    <property type="project" value="UniProtKB-UniRule"/>
</dbReference>
<dbReference type="CDD" id="cd01047">
    <property type="entry name" value="ACSF"/>
    <property type="match status" value="1"/>
</dbReference>
<dbReference type="HAMAP" id="MF_01840">
    <property type="entry name" value="AcsF"/>
    <property type="match status" value="1"/>
</dbReference>
<dbReference type="InterPro" id="IPR008434">
    <property type="entry name" value="AcsF"/>
</dbReference>
<dbReference type="InterPro" id="IPR009078">
    <property type="entry name" value="Ferritin-like_SF"/>
</dbReference>
<dbReference type="InterPro" id="IPR003251">
    <property type="entry name" value="Rr_diiron-bd_dom"/>
</dbReference>
<dbReference type="NCBIfam" id="TIGR02029">
    <property type="entry name" value="AcsF"/>
    <property type="match status" value="1"/>
</dbReference>
<dbReference type="NCBIfam" id="NF010172">
    <property type="entry name" value="PRK13654.1"/>
    <property type="match status" value="1"/>
</dbReference>
<dbReference type="PANTHER" id="PTHR31053">
    <property type="entry name" value="MAGNESIUM-PROTOPORPHYRIN IX MONOMETHYL ESTER [OXIDATIVE] CYCLASE, CHLOROPLASTIC"/>
    <property type="match status" value="1"/>
</dbReference>
<dbReference type="PANTHER" id="PTHR31053:SF2">
    <property type="entry name" value="MAGNESIUM-PROTOPORPHYRIN IX MONOMETHYL ESTER [OXIDATIVE] CYCLASE, CHLOROPLASTIC"/>
    <property type="match status" value="1"/>
</dbReference>
<dbReference type="Pfam" id="PF02915">
    <property type="entry name" value="Rubrerythrin"/>
    <property type="match status" value="1"/>
</dbReference>
<dbReference type="SUPFAM" id="SSF47240">
    <property type="entry name" value="Ferritin-like"/>
    <property type="match status" value="1"/>
</dbReference>
<gene>
    <name evidence="1" type="primary">acsF1</name>
    <name type="ordered locus">sll1214</name>
</gene>